<accession>Q660I6</accession>
<keyword id="KW-0963">Cytoplasm</keyword>
<keyword id="KW-0285">Flavoprotein</keyword>
<keyword id="KW-0288">FMN</keyword>
<keyword id="KW-0413">Isomerase</keyword>
<keyword id="KW-0414">Isoprene biosynthesis</keyword>
<keyword id="KW-0460">Magnesium</keyword>
<keyword id="KW-0479">Metal-binding</keyword>
<keyword id="KW-0521">NADP</keyword>
<sequence>MGIEPNILENKKRHIEICLNKNDVKGGCNFLKFIKLKHNALSDFNFSEISLKEEIFGYNINMPVFISSMTGGGKQGNDFNKSLVKIANYLKIPIGLGSFKLLFKYPEYIRDFSLKRYAYDIPLFANIGAVQIVEFGISRIAEMIKRLEVDAIVTHLNAGQELMNVNGDRNFKGIKESIAKLADFLSVPLIVKETGFGISPNDVKELLKLGVSYIDLAGSGGTNWVLVEGIRSNNLNVASCFSDWGIPSIFTLLGIDDSLKANVFASGGYETGMDIAKGIALGAKLIGVAAVVLRAFYNSGEDAVLSLFSDYEHVLKMSMFLSGSKSLSELRKNKYFLSSYLLAELGVFKQFYET</sequence>
<feature type="chain" id="PRO_0000229501" description="Isopentenyl-diphosphate delta-isomerase">
    <location>
        <begin position="1"/>
        <end position="354"/>
    </location>
</feature>
<feature type="binding site" evidence="1">
    <location>
        <begin position="11"/>
        <end position="12"/>
    </location>
    <ligand>
        <name>substrate</name>
    </ligand>
</feature>
<feature type="binding site" evidence="1">
    <location>
        <position position="67"/>
    </location>
    <ligand>
        <name>FMN</name>
        <dbReference type="ChEBI" id="CHEBI:58210"/>
    </ligand>
</feature>
<feature type="binding site" evidence="1">
    <location>
        <begin position="68"/>
        <end position="70"/>
    </location>
    <ligand>
        <name>FMN</name>
        <dbReference type="ChEBI" id="CHEBI:58210"/>
    </ligand>
</feature>
<feature type="binding site" evidence="1">
    <location>
        <begin position="98"/>
        <end position="100"/>
    </location>
    <ligand>
        <name>substrate</name>
    </ligand>
</feature>
<feature type="binding site" evidence="1">
    <location>
        <position position="98"/>
    </location>
    <ligand>
        <name>FMN</name>
        <dbReference type="ChEBI" id="CHEBI:58210"/>
    </ligand>
</feature>
<feature type="binding site" evidence="1">
    <location>
        <position position="126"/>
    </location>
    <ligand>
        <name>FMN</name>
        <dbReference type="ChEBI" id="CHEBI:58210"/>
    </ligand>
</feature>
<feature type="binding site" evidence="1">
    <location>
        <position position="160"/>
    </location>
    <ligand>
        <name>substrate</name>
    </ligand>
</feature>
<feature type="binding site" evidence="1">
    <location>
        <position position="161"/>
    </location>
    <ligand>
        <name>Mg(2+)</name>
        <dbReference type="ChEBI" id="CHEBI:18420"/>
    </ligand>
</feature>
<feature type="binding site" evidence="1">
    <location>
        <position position="192"/>
    </location>
    <ligand>
        <name>FMN</name>
        <dbReference type="ChEBI" id="CHEBI:58210"/>
    </ligand>
</feature>
<feature type="binding site" evidence="1">
    <location>
        <position position="222"/>
    </location>
    <ligand>
        <name>FMN</name>
        <dbReference type="ChEBI" id="CHEBI:58210"/>
    </ligand>
</feature>
<feature type="binding site" evidence="1">
    <location>
        <begin position="289"/>
        <end position="290"/>
    </location>
    <ligand>
        <name>FMN</name>
        <dbReference type="ChEBI" id="CHEBI:58210"/>
    </ligand>
</feature>
<reference key="1">
    <citation type="journal article" date="2004" name="Nucleic Acids Res.">
        <title>Comparative analysis of the Borrelia garinii genome.</title>
        <authorList>
            <person name="Gloeckner G."/>
            <person name="Lehmann R."/>
            <person name="Romualdi A."/>
            <person name="Pradella S."/>
            <person name="Schulte-Spechtel U."/>
            <person name="Schilhabel M."/>
            <person name="Wilske B."/>
            <person name="Suehnel J."/>
            <person name="Platzer M."/>
        </authorList>
    </citation>
    <scope>NUCLEOTIDE SEQUENCE [LARGE SCALE GENOMIC DNA]</scope>
    <source>
        <strain>ATCC BAA-2496 / DSM 23469 / PBi</strain>
    </source>
</reference>
<protein>
    <recommendedName>
        <fullName evidence="1">Isopentenyl-diphosphate delta-isomerase</fullName>
        <shortName evidence="1">IPP isomerase</shortName>
        <ecNumber evidence="1">5.3.3.2</ecNumber>
    </recommendedName>
    <alternativeName>
        <fullName evidence="1">Isopentenyl diphosphate:dimethylallyl diphosphate isomerase</fullName>
    </alternativeName>
    <alternativeName>
        <fullName evidence="1">Isopentenyl pyrophosphate isomerase</fullName>
    </alternativeName>
    <alternativeName>
        <fullName evidence="1">Type 2 isopentenyl diphosphate isomerase</fullName>
        <shortName evidence="1">IDI-2</shortName>
    </alternativeName>
</protein>
<dbReference type="EC" id="5.3.3.2" evidence="1"/>
<dbReference type="EMBL" id="CP000013">
    <property type="protein sequence ID" value="AAU07535.1"/>
    <property type="molecule type" value="Genomic_DNA"/>
</dbReference>
<dbReference type="RefSeq" id="WP_011193988.1">
    <property type="nucleotide sequence ID" value="NZ_CP028872.1"/>
</dbReference>
<dbReference type="SMR" id="Q660I6"/>
<dbReference type="GeneID" id="45161482"/>
<dbReference type="KEGG" id="bga:BG0707"/>
<dbReference type="eggNOG" id="COG1304">
    <property type="taxonomic scope" value="Bacteria"/>
</dbReference>
<dbReference type="HOGENOM" id="CLU_065515_1_0_12"/>
<dbReference type="OrthoDB" id="9795032at2"/>
<dbReference type="Proteomes" id="UP000002276">
    <property type="component" value="Chromosome"/>
</dbReference>
<dbReference type="GO" id="GO:0005737">
    <property type="term" value="C:cytoplasm"/>
    <property type="evidence" value="ECO:0007669"/>
    <property type="project" value="UniProtKB-SubCell"/>
</dbReference>
<dbReference type="GO" id="GO:0010181">
    <property type="term" value="F:FMN binding"/>
    <property type="evidence" value="ECO:0007669"/>
    <property type="project" value="UniProtKB-UniRule"/>
</dbReference>
<dbReference type="GO" id="GO:0004452">
    <property type="term" value="F:isopentenyl-diphosphate delta-isomerase activity"/>
    <property type="evidence" value="ECO:0007669"/>
    <property type="project" value="UniProtKB-UniRule"/>
</dbReference>
<dbReference type="GO" id="GO:0000287">
    <property type="term" value="F:magnesium ion binding"/>
    <property type="evidence" value="ECO:0007669"/>
    <property type="project" value="UniProtKB-UniRule"/>
</dbReference>
<dbReference type="GO" id="GO:0070402">
    <property type="term" value="F:NADPH binding"/>
    <property type="evidence" value="ECO:0007669"/>
    <property type="project" value="UniProtKB-UniRule"/>
</dbReference>
<dbReference type="GO" id="GO:0016491">
    <property type="term" value="F:oxidoreductase activity"/>
    <property type="evidence" value="ECO:0007669"/>
    <property type="project" value="InterPro"/>
</dbReference>
<dbReference type="GO" id="GO:0008299">
    <property type="term" value="P:isoprenoid biosynthetic process"/>
    <property type="evidence" value="ECO:0007669"/>
    <property type="project" value="UniProtKB-UniRule"/>
</dbReference>
<dbReference type="CDD" id="cd02811">
    <property type="entry name" value="IDI-2_FMN"/>
    <property type="match status" value="1"/>
</dbReference>
<dbReference type="Gene3D" id="3.20.20.70">
    <property type="entry name" value="Aldolase class I"/>
    <property type="match status" value="1"/>
</dbReference>
<dbReference type="HAMAP" id="MF_00354">
    <property type="entry name" value="Idi_2"/>
    <property type="match status" value="1"/>
</dbReference>
<dbReference type="InterPro" id="IPR013785">
    <property type="entry name" value="Aldolase_TIM"/>
</dbReference>
<dbReference type="InterPro" id="IPR000262">
    <property type="entry name" value="FMN-dep_DH"/>
</dbReference>
<dbReference type="InterPro" id="IPR011179">
    <property type="entry name" value="IPdP_isomerase"/>
</dbReference>
<dbReference type="NCBIfam" id="TIGR02151">
    <property type="entry name" value="IPP_isom_2"/>
    <property type="match status" value="1"/>
</dbReference>
<dbReference type="PANTHER" id="PTHR43665">
    <property type="entry name" value="ISOPENTENYL-DIPHOSPHATE DELTA-ISOMERASE"/>
    <property type="match status" value="1"/>
</dbReference>
<dbReference type="PANTHER" id="PTHR43665:SF1">
    <property type="entry name" value="ISOPENTENYL-DIPHOSPHATE DELTA-ISOMERASE"/>
    <property type="match status" value="1"/>
</dbReference>
<dbReference type="Pfam" id="PF01070">
    <property type="entry name" value="FMN_dh"/>
    <property type="match status" value="1"/>
</dbReference>
<dbReference type="PIRSF" id="PIRSF003314">
    <property type="entry name" value="IPP_isomerase"/>
    <property type="match status" value="1"/>
</dbReference>
<dbReference type="SUPFAM" id="SSF51395">
    <property type="entry name" value="FMN-linked oxidoreductases"/>
    <property type="match status" value="1"/>
</dbReference>
<name>IDI2_BORGP</name>
<gene>
    <name evidence="1" type="primary">fni</name>
    <name type="ordered locus">BG0707</name>
</gene>
<organism>
    <name type="scientific">Borrelia garinii subsp. bavariensis (strain ATCC BAA-2496 / DSM 23469 / PBi)</name>
    <name type="common">Borreliella bavariensis</name>
    <dbReference type="NCBI Taxonomy" id="290434"/>
    <lineage>
        <taxon>Bacteria</taxon>
        <taxon>Pseudomonadati</taxon>
        <taxon>Spirochaetota</taxon>
        <taxon>Spirochaetia</taxon>
        <taxon>Spirochaetales</taxon>
        <taxon>Borreliaceae</taxon>
        <taxon>Borreliella</taxon>
    </lineage>
</organism>
<proteinExistence type="inferred from homology"/>
<evidence type="ECO:0000255" key="1">
    <source>
        <dbReference type="HAMAP-Rule" id="MF_00354"/>
    </source>
</evidence>
<comment type="function">
    <text evidence="1">Involved in the biosynthesis of isoprenoids. Catalyzes the 1,3-allylic rearrangement of the homoallylic substrate isopentenyl (IPP) to its allylic isomer, dimethylallyl diphosphate (DMAPP).</text>
</comment>
<comment type="catalytic activity">
    <reaction evidence="1">
        <text>isopentenyl diphosphate = dimethylallyl diphosphate</text>
        <dbReference type="Rhea" id="RHEA:23284"/>
        <dbReference type="ChEBI" id="CHEBI:57623"/>
        <dbReference type="ChEBI" id="CHEBI:128769"/>
        <dbReference type="EC" id="5.3.3.2"/>
    </reaction>
</comment>
<comment type="cofactor">
    <cofactor evidence="1">
        <name>FMN</name>
        <dbReference type="ChEBI" id="CHEBI:58210"/>
    </cofactor>
</comment>
<comment type="cofactor">
    <cofactor evidence="1">
        <name>NADPH</name>
        <dbReference type="ChEBI" id="CHEBI:57783"/>
    </cofactor>
</comment>
<comment type="cofactor">
    <cofactor evidence="1">
        <name>Mg(2+)</name>
        <dbReference type="ChEBI" id="CHEBI:18420"/>
    </cofactor>
</comment>
<comment type="subunit">
    <text evidence="1">Homooctamer. Dimer of tetramers.</text>
</comment>
<comment type="subcellular location">
    <subcellularLocation>
        <location evidence="1">Cytoplasm</location>
    </subcellularLocation>
</comment>
<comment type="similarity">
    <text evidence="1">Belongs to the IPP isomerase type 2 family.</text>
</comment>